<accession>A8G6C1</accession>
<gene>
    <name evidence="1" type="primary">panB</name>
    <name type="ordered locus">P9215_15391</name>
</gene>
<reference key="1">
    <citation type="journal article" date="2007" name="PLoS Genet.">
        <title>Patterns and implications of gene gain and loss in the evolution of Prochlorococcus.</title>
        <authorList>
            <person name="Kettler G.C."/>
            <person name="Martiny A.C."/>
            <person name="Huang K."/>
            <person name="Zucker J."/>
            <person name="Coleman M.L."/>
            <person name="Rodrigue S."/>
            <person name="Chen F."/>
            <person name="Lapidus A."/>
            <person name="Ferriera S."/>
            <person name="Johnson J."/>
            <person name="Steglich C."/>
            <person name="Church G.M."/>
            <person name="Richardson P."/>
            <person name="Chisholm S.W."/>
        </authorList>
    </citation>
    <scope>NUCLEOTIDE SEQUENCE [LARGE SCALE GENOMIC DNA]</scope>
    <source>
        <strain>MIT 9215</strain>
    </source>
</reference>
<name>PANB_PROM2</name>
<feature type="chain" id="PRO_1000058185" description="3-methyl-2-oxobutanoate hydroxymethyltransferase">
    <location>
        <begin position="1"/>
        <end position="257"/>
    </location>
</feature>
<feature type="active site" description="Proton acceptor" evidence="1">
    <location>
        <position position="185"/>
    </location>
</feature>
<feature type="binding site" evidence="1">
    <location>
        <begin position="42"/>
        <end position="43"/>
    </location>
    <ligand>
        <name>3-methyl-2-oxobutanoate</name>
        <dbReference type="ChEBI" id="CHEBI:11851"/>
    </ligand>
</feature>
<feature type="binding site" evidence="1">
    <location>
        <position position="42"/>
    </location>
    <ligand>
        <name>Mg(2+)</name>
        <dbReference type="ChEBI" id="CHEBI:18420"/>
    </ligand>
</feature>
<feature type="binding site" evidence="1">
    <location>
        <position position="86"/>
    </location>
    <ligand>
        <name>3-methyl-2-oxobutanoate</name>
        <dbReference type="ChEBI" id="CHEBI:11851"/>
    </ligand>
</feature>
<feature type="binding site" evidence="1">
    <location>
        <position position="86"/>
    </location>
    <ligand>
        <name>Mg(2+)</name>
        <dbReference type="ChEBI" id="CHEBI:18420"/>
    </ligand>
</feature>
<feature type="binding site" evidence="1">
    <location>
        <position position="116"/>
    </location>
    <ligand>
        <name>3-methyl-2-oxobutanoate</name>
        <dbReference type="ChEBI" id="CHEBI:11851"/>
    </ligand>
</feature>
<feature type="binding site" evidence="1">
    <location>
        <position position="118"/>
    </location>
    <ligand>
        <name>Mg(2+)</name>
        <dbReference type="ChEBI" id="CHEBI:18420"/>
    </ligand>
</feature>
<keyword id="KW-0963">Cytoplasm</keyword>
<keyword id="KW-0460">Magnesium</keyword>
<keyword id="KW-0479">Metal-binding</keyword>
<keyword id="KW-0566">Pantothenate biosynthesis</keyword>
<keyword id="KW-0808">Transferase</keyword>
<dbReference type="EC" id="2.1.2.11" evidence="1"/>
<dbReference type="EMBL" id="CP000825">
    <property type="protein sequence ID" value="ABV51152.1"/>
    <property type="molecule type" value="Genomic_DNA"/>
</dbReference>
<dbReference type="RefSeq" id="WP_012008199.1">
    <property type="nucleotide sequence ID" value="NC_009840.1"/>
</dbReference>
<dbReference type="SMR" id="A8G6C1"/>
<dbReference type="STRING" id="93060.P9215_15391"/>
<dbReference type="KEGG" id="pmh:P9215_15391"/>
<dbReference type="eggNOG" id="COG0413">
    <property type="taxonomic scope" value="Bacteria"/>
</dbReference>
<dbReference type="HOGENOM" id="CLU_036645_1_0_3"/>
<dbReference type="OrthoDB" id="9781789at2"/>
<dbReference type="UniPathway" id="UPA00028">
    <property type="reaction ID" value="UER00003"/>
</dbReference>
<dbReference type="Proteomes" id="UP000002014">
    <property type="component" value="Chromosome"/>
</dbReference>
<dbReference type="GO" id="GO:0005737">
    <property type="term" value="C:cytoplasm"/>
    <property type="evidence" value="ECO:0007669"/>
    <property type="project" value="UniProtKB-SubCell"/>
</dbReference>
<dbReference type="GO" id="GO:0003864">
    <property type="term" value="F:3-methyl-2-oxobutanoate hydroxymethyltransferase activity"/>
    <property type="evidence" value="ECO:0007669"/>
    <property type="project" value="UniProtKB-UniRule"/>
</dbReference>
<dbReference type="GO" id="GO:0000287">
    <property type="term" value="F:magnesium ion binding"/>
    <property type="evidence" value="ECO:0007669"/>
    <property type="project" value="TreeGrafter"/>
</dbReference>
<dbReference type="GO" id="GO:0015940">
    <property type="term" value="P:pantothenate biosynthetic process"/>
    <property type="evidence" value="ECO:0007669"/>
    <property type="project" value="UniProtKB-UniRule"/>
</dbReference>
<dbReference type="CDD" id="cd06557">
    <property type="entry name" value="KPHMT-like"/>
    <property type="match status" value="1"/>
</dbReference>
<dbReference type="Gene3D" id="3.20.20.60">
    <property type="entry name" value="Phosphoenolpyruvate-binding domains"/>
    <property type="match status" value="1"/>
</dbReference>
<dbReference type="HAMAP" id="MF_00156">
    <property type="entry name" value="PanB"/>
    <property type="match status" value="1"/>
</dbReference>
<dbReference type="InterPro" id="IPR003700">
    <property type="entry name" value="Pantoate_hydroxy_MeTrfase"/>
</dbReference>
<dbReference type="InterPro" id="IPR015813">
    <property type="entry name" value="Pyrv/PenolPyrv_kinase-like_dom"/>
</dbReference>
<dbReference type="InterPro" id="IPR040442">
    <property type="entry name" value="Pyrv_kinase-like_dom_sf"/>
</dbReference>
<dbReference type="NCBIfam" id="TIGR00222">
    <property type="entry name" value="panB"/>
    <property type="match status" value="1"/>
</dbReference>
<dbReference type="NCBIfam" id="NF001452">
    <property type="entry name" value="PRK00311.1"/>
    <property type="match status" value="1"/>
</dbReference>
<dbReference type="PANTHER" id="PTHR20881">
    <property type="entry name" value="3-METHYL-2-OXOBUTANOATE HYDROXYMETHYLTRANSFERASE"/>
    <property type="match status" value="1"/>
</dbReference>
<dbReference type="PANTHER" id="PTHR20881:SF0">
    <property type="entry name" value="3-METHYL-2-OXOBUTANOATE HYDROXYMETHYLTRANSFERASE"/>
    <property type="match status" value="1"/>
</dbReference>
<dbReference type="Pfam" id="PF02548">
    <property type="entry name" value="Pantoate_transf"/>
    <property type="match status" value="1"/>
</dbReference>
<dbReference type="PIRSF" id="PIRSF000388">
    <property type="entry name" value="Pantoate_hydroxy_MeTrfase"/>
    <property type="match status" value="1"/>
</dbReference>
<dbReference type="SUPFAM" id="SSF51621">
    <property type="entry name" value="Phosphoenolpyruvate/pyruvate domain"/>
    <property type="match status" value="1"/>
</dbReference>
<sequence length="257" mass="28302">MLPSDLVKYKKNSQKIIALTAWDSISGSIAEQANVDLVLVGDSLAMVCLGYKSTLPLTLGNIIYHTNAVSRGFKKNIEEQPLVIADMPFLTYQCGEDKAVEYAGKIIQSTYAKAVKIEGAEPEIQKVISRLIRMGIPVMGHIGLTPQSYLNLGLKKQGESLESQEKIKKEASILEKLGCFSIVLEHIPDLLAKEIQNTLTIPTIGIGAGNYCDGQVRVTADLLGLNDDQPPFCQPIIQGKELFMKKLKEWVESERLN</sequence>
<evidence type="ECO:0000255" key="1">
    <source>
        <dbReference type="HAMAP-Rule" id="MF_00156"/>
    </source>
</evidence>
<organism>
    <name type="scientific">Prochlorococcus marinus (strain MIT 9215)</name>
    <dbReference type="NCBI Taxonomy" id="93060"/>
    <lineage>
        <taxon>Bacteria</taxon>
        <taxon>Bacillati</taxon>
        <taxon>Cyanobacteriota</taxon>
        <taxon>Cyanophyceae</taxon>
        <taxon>Synechococcales</taxon>
        <taxon>Prochlorococcaceae</taxon>
        <taxon>Prochlorococcus</taxon>
    </lineage>
</organism>
<protein>
    <recommendedName>
        <fullName evidence="1">3-methyl-2-oxobutanoate hydroxymethyltransferase</fullName>
        <ecNumber evidence="1">2.1.2.11</ecNumber>
    </recommendedName>
    <alternativeName>
        <fullName evidence="1">Ketopantoate hydroxymethyltransferase</fullName>
        <shortName evidence="1">KPHMT</shortName>
    </alternativeName>
</protein>
<comment type="function">
    <text evidence="1">Catalyzes the reversible reaction in which hydroxymethyl group from 5,10-methylenetetrahydrofolate is transferred onto alpha-ketoisovalerate to form ketopantoate.</text>
</comment>
<comment type="catalytic activity">
    <reaction evidence="1">
        <text>3-methyl-2-oxobutanoate + (6R)-5,10-methylene-5,6,7,8-tetrahydrofolate + H2O = 2-dehydropantoate + (6S)-5,6,7,8-tetrahydrofolate</text>
        <dbReference type="Rhea" id="RHEA:11824"/>
        <dbReference type="ChEBI" id="CHEBI:11561"/>
        <dbReference type="ChEBI" id="CHEBI:11851"/>
        <dbReference type="ChEBI" id="CHEBI:15377"/>
        <dbReference type="ChEBI" id="CHEBI:15636"/>
        <dbReference type="ChEBI" id="CHEBI:57453"/>
        <dbReference type="EC" id="2.1.2.11"/>
    </reaction>
</comment>
<comment type="cofactor">
    <cofactor evidence="1">
        <name>Mg(2+)</name>
        <dbReference type="ChEBI" id="CHEBI:18420"/>
    </cofactor>
    <text evidence="1">Binds 1 Mg(2+) ion per subunit.</text>
</comment>
<comment type="pathway">
    <text evidence="1">Cofactor biosynthesis; (R)-pantothenate biosynthesis; (R)-pantoate from 3-methyl-2-oxobutanoate: step 1/2.</text>
</comment>
<comment type="subunit">
    <text evidence="1">Homodecamer; pentamer of dimers.</text>
</comment>
<comment type="subcellular location">
    <subcellularLocation>
        <location evidence="1">Cytoplasm</location>
    </subcellularLocation>
</comment>
<comment type="similarity">
    <text evidence="1">Belongs to the PanB family.</text>
</comment>
<proteinExistence type="inferred from homology"/>